<protein>
    <recommendedName>
        <fullName>DNA-binding protein HU-beta</fullName>
    </recommendedName>
    <alternativeName>
        <fullName>HU-1</fullName>
    </alternativeName>
    <alternativeName>
        <fullName>NS1</fullName>
    </alternativeName>
</protein>
<comment type="function">
    <text evidence="1">Histone-like DNA-binding protein which is capable of wrapping DNA to stabilize it, and thus to prevent its denaturation under extreme environmental conditions.</text>
</comment>
<comment type="subunit">
    <text evidence="1">Heterodimer of an alpha and a beta chain.</text>
</comment>
<comment type="similarity">
    <text evidence="2">Belongs to the bacterial histone-like protein family.</text>
</comment>
<evidence type="ECO:0000250" key="1"/>
<evidence type="ECO:0000305" key="2"/>
<feature type="chain" id="PRO_0000104970" description="DNA-binding protein HU-beta">
    <location>
        <begin position="1"/>
        <end position="90"/>
    </location>
</feature>
<dbReference type="EMBL" id="AL513382">
    <property type="protein sequence ID" value="CAD08910.1"/>
    <property type="molecule type" value="Genomic_DNA"/>
</dbReference>
<dbReference type="EMBL" id="AE014613">
    <property type="protein sequence ID" value="AAO69999.1"/>
    <property type="molecule type" value="Genomic_DNA"/>
</dbReference>
<dbReference type="RefSeq" id="NP_455048.1">
    <property type="nucleotide sequence ID" value="NC_003198.1"/>
</dbReference>
<dbReference type="RefSeq" id="WP_001043544.1">
    <property type="nucleotide sequence ID" value="NZ_OU943338.1"/>
</dbReference>
<dbReference type="BMRB" id="P0A1R9"/>
<dbReference type="SMR" id="P0A1R9"/>
<dbReference type="STRING" id="220341.gene:17584515"/>
<dbReference type="KEGG" id="stt:t2409"/>
<dbReference type="KEGG" id="sty:STY0493"/>
<dbReference type="PATRIC" id="fig|220341.7.peg.495"/>
<dbReference type="eggNOG" id="COG0776">
    <property type="taxonomic scope" value="Bacteria"/>
</dbReference>
<dbReference type="HOGENOM" id="CLU_105066_3_2_6"/>
<dbReference type="OMA" id="AFSAGKM"/>
<dbReference type="OrthoDB" id="9799835at2"/>
<dbReference type="Proteomes" id="UP000000541">
    <property type="component" value="Chromosome"/>
</dbReference>
<dbReference type="Proteomes" id="UP000002670">
    <property type="component" value="Chromosome"/>
</dbReference>
<dbReference type="GO" id="GO:0005829">
    <property type="term" value="C:cytosol"/>
    <property type="evidence" value="ECO:0007669"/>
    <property type="project" value="TreeGrafter"/>
</dbReference>
<dbReference type="GO" id="GO:0003677">
    <property type="term" value="F:DNA binding"/>
    <property type="evidence" value="ECO:0007669"/>
    <property type="project" value="UniProtKB-KW"/>
</dbReference>
<dbReference type="GO" id="GO:0030527">
    <property type="term" value="F:structural constituent of chromatin"/>
    <property type="evidence" value="ECO:0007669"/>
    <property type="project" value="InterPro"/>
</dbReference>
<dbReference type="GO" id="GO:0030261">
    <property type="term" value="P:chromosome condensation"/>
    <property type="evidence" value="ECO:0007669"/>
    <property type="project" value="UniProtKB-KW"/>
</dbReference>
<dbReference type="CDD" id="cd13831">
    <property type="entry name" value="HU"/>
    <property type="match status" value="1"/>
</dbReference>
<dbReference type="FunFam" id="4.10.520.10:FF:000001">
    <property type="entry name" value="DNA-binding protein HU"/>
    <property type="match status" value="1"/>
</dbReference>
<dbReference type="Gene3D" id="4.10.520.10">
    <property type="entry name" value="IHF-like DNA-binding proteins"/>
    <property type="match status" value="1"/>
</dbReference>
<dbReference type="InterPro" id="IPR000119">
    <property type="entry name" value="Hist_DNA-bd"/>
</dbReference>
<dbReference type="InterPro" id="IPR020816">
    <property type="entry name" value="Histone-like_DNA-bd_CS"/>
</dbReference>
<dbReference type="InterPro" id="IPR010992">
    <property type="entry name" value="IHF-like_DNA-bd_dom_sf"/>
</dbReference>
<dbReference type="NCBIfam" id="NF007945">
    <property type="entry name" value="PRK10664.1"/>
    <property type="match status" value="1"/>
</dbReference>
<dbReference type="PANTHER" id="PTHR33175">
    <property type="entry name" value="DNA-BINDING PROTEIN HU"/>
    <property type="match status" value="1"/>
</dbReference>
<dbReference type="PANTHER" id="PTHR33175:SF3">
    <property type="entry name" value="DNA-BINDING PROTEIN HU-BETA"/>
    <property type="match status" value="1"/>
</dbReference>
<dbReference type="Pfam" id="PF00216">
    <property type="entry name" value="Bac_DNA_binding"/>
    <property type="match status" value="1"/>
</dbReference>
<dbReference type="PRINTS" id="PR01727">
    <property type="entry name" value="DNABINDINGHU"/>
</dbReference>
<dbReference type="SMART" id="SM00411">
    <property type="entry name" value="BHL"/>
    <property type="match status" value="1"/>
</dbReference>
<dbReference type="SUPFAM" id="SSF47729">
    <property type="entry name" value="IHF-like DNA-binding proteins"/>
    <property type="match status" value="1"/>
</dbReference>
<dbReference type="PROSITE" id="PS00045">
    <property type="entry name" value="HISTONE_LIKE"/>
    <property type="match status" value="1"/>
</dbReference>
<organism>
    <name type="scientific">Salmonella typhi</name>
    <dbReference type="NCBI Taxonomy" id="90370"/>
    <lineage>
        <taxon>Bacteria</taxon>
        <taxon>Pseudomonadati</taxon>
        <taxon>Pseudomonadota</taxon>
        <taxon>Gammaproteobacteria</taxon>
        <taxon>Enterobacterales</taxon>
        <taxon>Enterobacteriaceae</taxon>
        <taxon>Salmonella</taxon>
    </lineage>
</organism>
<reference key="1">
    <citation type="journal article" date="2001" name="Nature">
        <title>Complete genome sequence of a multiple drug resistant Salmonella enterica serovar Typhi CT18.</title>
        <authorList>
            <person name="Parkhill J."/>
            <person name="Dougan G."/>
            <person name="James K.D."/>
            <person name="Thomson N.R."/>
            <person name="Pickard D."/>
            <person name="Wain J."/>
            <person name="Churcher C.M."/>
            <person name="Mungall K.L."/>
            <person name="Bentley S.D."/>
            <person name="Holden M.T.G."/>
            <person name="Sebaihia M."/>
            <person name="Baker S."/>
            <person name="Basham D."/>
            <person name="Brooks K."/>
            <person name="Chillingworth T."/>
            <person name="Connerton P."/>
            <person name="Cronin A."/>
            <person name="Davis P."/>
            <person name="Davies R.M."/>
            <person name="Dowd L."/>
            <person name="White N."/>
            <person name="Farrar J."/>
            <person name="Feltwell T."/>
            <person name="Hamlin N."/>
            <person name="Haque A."/>
            <person name="Hien T.T."/>
            <person name="Holroyd S."/>
            <person name="Jagels K."/>
            <person name="Krogh A."/>
            <person name="Larsen T.S."/>
            <person name="Leather S."/>
            <person name="Moule S."/>
            <person name="O'Gaora P."/>
            <person name="Parry C."/>
            <person name="Quail M.A."/>
            <person name="Rutherford K.M."/>
            <person name="Simmonds M."/>
            <person name="Skelton J."/>
            <person name="Stevens K."/>
            <person name="Whitehead S."/>
            <person name="Barrell B.G."/>
        </authorList>
    </citation>
    <scope>NUCLEOTIDE SEQUENCE [LARGE SCALE GENOMIC DNA]</scope>
    <source>
        <strain>CT18</strain>
    </source>
</reference>
<reference key="2">
    <citation type="journal article" date="2003" name="J. Bacteriol.">
        <title>Comparative genomics of Salmonella enterica serovar Typhi strains Ty2 and CT18.</title>
        <authorList>
            <person name="Deng W."/>
            <person name="Liou S.-R."/>
            <person name="Plunkett G. III"/>
            <person name="Mayhew G.F."/>
            <person name="Rose D.J."/>
            <person name="Burland V."/>
            <person name="Kodoyianni V."/>
            <person name="Schwartz D.C."/>
            <person name="Blattner F.R."/>
        </authorList>
    </citation>
    <scope>NUCLEOTIDE SEQUENCE [LARGE SCALE GENOMIC DNA]</scope>
    <source>
        <strain>ATCC 700931 / Ty2</strain>
    </source>
</reference>
<proteinExistence type="inferred from homology"/>
<accession>P0A1R9</accession>
<accession>P05515</accession>
<gene>
    <name type="primary">hupB</name>
    <name type="ordered locus">STY0493</name>
    <name type="ordered locus">t2409</name>
</gene>
<keyword id="KW-0226">DNA condensation</keyword>
<keyword id="KW-0238">DNA-binding</keyword>
<name>DBHB_SALTI</name>
<sequence>MNKSQLIEKIAAGADISKAAAGRALDAIIASVTESLKEGDDVALVGFGTFAVKERAARTGRNPQTGKEITIAAAKVPSFRAGKALKDAVN</sequence>